<accession>P0CO62</accession>
<accession>Q55N08</accession>
<accession>Q5KBD8</accession>
<gene>
    <name type="primary">PPE1</name>
    <name type="ordered locus">CNI02890</name>
</gene>
<feature type="chain" id="PRO_0000223663" description="Protein phosphatase methylesterase 1">
    <location>
        <begin position="1"/>
        <end position="422"/>
    </location>
</feature>
<feature type="region of interest" description="Disordered" evidence="2">
    <location>
        <begin position="1"/>
        <end position="27"/>
    </location>
</feature>
<feature type="active site" evidence="1">
    <location>
        <position position="207"/>
    </location>
</feature>
<feature type="active site" evidence="1">
    <location>
        <position position="234"/>
    </location>
</feature>
<feature type="active site" evidence="1">
    <location>
        <position position="371"/>
    </location>
</feature>
<organism>
    <name type="scientific">Cryptococcus neoformans var. neoformans serotype D (strain JEC21 / ATCC MYA-565)</name>
    <name type="common">Filobasidiella neoformans</name>
    <dbReference type="NCBI Taxonomy" id="214684"/>
    <lineage>
        <taxon>Eukaryota</taxon>
        <taxon>Fungi</taxon>
        <taxon>Dikarya</taxon>
        <taxon>Basidiomycota</taxon>
        <taxon>Agaricomycotina</taxon>
        <taxon>Tremellomycetes</taxon>
        <taxon>Tremellales</taxon>
        <taxon>Cryptococcaceae</taxon>
        <taxon>Cryptococcus</taxon>
        <taxon>Cryptococcus neoformans species complex</taxon>
    </lineage>
</organism>
<name>PPME1_CRYNJ</name>
<sequence length="422" mass="45609">MSDMFRKSVLNKLPHLPPTRAPWADESEPIEEIDEEDEQLDGIGEFKPATMGPSKHDTQDYSPLSASTFFAQAAEVQPPSTPCTFRVYLTPPNLSIASANAGTPPGPSGLRTQQQTNRHGTYLVCHHGGGASGLGFAPLAREVKAKGNGEMGVLAFDCRGHGKTSTSDPNLELDLSHDTLLSDFMAIIEMMFPDPKESPSLILLGHSMGAAPVVSAAPELQKKGYTIPGVVVLDVVEGTAVESLPLMKSVLSKRPESFRSVIDAIYWHVTSNSIRNVESARVSVPHIIVPAPSSSSSDPSANPGGKQVWRTNLVGTEPYWEGWYKGLSQRFLRTKCARLLVLAGQERLDRELMVGQMQGKFQLEVMSDVGHYLHEDNPAGLAATLITFWHRNTRVLVLPPKIGAPGPGARGGPVEVKQVGQQ</sequence>
<keyword id="KW-0378">Hydrolase</keyword>
<keyword id="KW-1185">Reference proteome</keyword>
<keyword id="KW-0719">Serine esterase</keyword>
<protein>
    <recommendedName>
        <fullName>Protein phosphatase methylesterase 1</fullName>
        <shortName>PME-1</shortName>
        <ecNumber>3.1.1.89</ecNumber>
    </recommendedName>
</protein>
<evidence type="ECO:0000250" key="1"/>
<evidence type="ECO:0000256" key="2">
    <source>
        <dbReference type="SAM" id="MobiDB-lite"/>
    </source>
</evidence>
<evidence type="ECO:0000305" key="3"/>
<proteinExistence type="inferred from homology"/>
<comment type="function">
    <text evidence="1">Demethylates proteins that have been reversibly carboxymethylated. Demethylates the phosphatase PP2A catalytic subunit (By similarity).</text>
</comment>
<comment type="catalytic activity">
    <reaction>
        <text>[phosphatase 2A protein]-C-terminal L-leucine methyl ester + H2O = [phosphatase 2A protein]-C-terminal L-leucine + methanol + H(+)</text>
        <dbReference type="Rhea" id="RHEA:48548"/>
        <dbReference type="Rhea" id="RHEA-COMP:12134"/>
        <dbReference type="Rhea" id="RHEA-COMP:12135"/>
        <dbReference type="ChEBI" id="CHEBI:15377"/>
        <dbReference type="ChEBI" id="CHEBI:15378"/>
        <dbReference type="ChEBI" id="CHEBI:17790"/>
        <dbReference type="ChEBI" id="CHEBI:90516"/>
        <dbReference type="ChEBI" id="CHEBI:90517"/>
        <dbReference type="EC" id="3.1.1.89"/>
    </reaction>
</comment>
<comment type="similarity">
    <text evidence="3">Belongs to the AB hydrolase superfamily.</text>
</comment>
<reference key="1">
    <citation type="journal article" date="2005" name="Science">
        <title>The genome of the basidiomycetous yeast and human pathogen Cryptococcus neoformans.</title>
        <authorList>
            <person name="Loftus B.J."/>
            <person name="Fung E."/>
            <person name="Roncaglia P."/>
            <person name="Rowley D."/>
            <person name="Amedeo P."/>
            <person name="Bruno D."/>
            <person name="Vamathevan J."/>
            <person name="Miranda M."/>
            <person name="Anderson I.J."/>
            <person name="Fraser J.A."/>
            <person name="Allen J.E."/>
            <person name="Bosdet I.E."/>
            <person name="Brent M.R."/>
            <person name="Chiu R."/>
            <person name="Doering T.L."/>
            <person name="Donlin M.J."/>
            <person name="D'Souza C.A."/>
            <person name="Fox D.S."/>
            <person name="Grinberg V."/>
            <person name="Fu J."/>
            <person name="Fukushima M."/>
            <person name="Haas B.J."/>
            <person name="Huang J.C."/>
            <person name="Janbon G."/>
            <person name="Jones S.J.M."/>
            <person name="Koo H.L."/>
            <person name="Krzywinski M.I."/>
            <person name="Kwon-Chung K.J."/>
            <person name="Lengeler K.B."/>
            <person name="Maiti R."/>
            <person name="Marra M.A."/>
            <person name="Marra R.E."/>
            <person name="Mathewson C.A."/>
            <person name="Mitchell T.G."/>
            <person name="Pertea M."/>
            <person name="Riggs F.R."/>
            <person name="Salzberg S.L."/>
            <person name="Schein J.E."/>
            <person name="Shvartsbeyn A."/>
            <person name="Shin H."/>
            <person name="Shumway M."/>
            <person name="Specht C.A."/>
            <person name="Suh B.B."/>
            <person name="Tenney A."/>
            <person name="Utterback T.R."/>
            <person name="Wickes B.L."/>
            <person name="Wortman J.R."/>
            <person name="Wye N.H."/>
            <person name="Kronstad J.W."/>
            <person name="Lodge J.K."/>
            <person name="Heitman J."/>
            <person name="Davis R.W."/>
            <person name="Fraser C.M."/>
            <person name="Hyman R.W."/>
        </authorList>
    </citation>
    <scope>NUCLEOTIDE SEQUENCE [LARGE SCALE GENOMIC DNA]</scope>
    <source>
        <strain>JEC21 / ATCC MYA-565</strain>
    </source>
</reference>
<dbReference type="EC" id="3.1.1.89"/>
<dbReference type="EMBL" id="AE017349">
    <property type="protein sequence ID" value="AAW45345.1"/>
    <property type="molecule type" value="Genomic_DNA"/>
</dbReference>
<dbReference type="RefSeq" id="XP_572652.1">
    <property type="nucleotide sequence ID" value="XM_572652.1"/>
</dbReference>
<dbReference type="SMR" id="P0CO62"/>
<dbReference type="FunCoup" id="P0CO62">
    <property type="interactions" value="502"/>
</dbReference>
<dbReference type="STRING" id="214684.P0CO62"/>
<dbReference type="ESTHER" id="cryne-ppme1">
    <property type="family name" value="PPase_methylesterase_euk"/>
</dbReference>
<dbReference type="MEROPS" id="S33.B12"/>
<dbReference type="PaxDb" id="214684-P0CO62"/>
<dbReference type="EnsemblFungi" id="AAW45345">
    <property type="protein sequence ID" value="AAW45345"/>
    <property type="gene ID" value="CNI02890"/>
</dbReference>
<dbReference type="GeneID" id="3259770"/>
<dbReference type="KEGG" id="cne:CNI02890"/>
<dbReference type="VEuPathDB" id="FungiDB:CNI02890"/>
<dbReference type="eggNOG" id="KOG2564">
    <property type="taxonomic scope" value="Eukaryota"/>
</dbReference>
<dbReference type="HOGENOM" id="CLU_024818_3_1_1"/>
<dbReference type="InParanoid" id="P0CO62"/>
<dbReference type="OMA" id="VMVCHHG"/>
<dbReference type="OrthoDB" id="194865at2759"/>
<dbReference type="Proteomes" id="UP000002149">
    <property type="component" value="Chromosome 9"/>
</dbReference>
<dbReference type="GO" id="GO:0051722">
    <property type="term" value="F:protein C-terminal methylesterase activity"/>
    <property type="evidence" value="ECO:0000318"/>
    <property type="project" value="GO_Central"/>
</dbReference>
<dbReference type="FunFam" id="3.40.50.1820:FF:000412">
    <property type="entry name" value="Protein phosphatase methylesterase 1"/>
    <property type="match status" value="1"/>
</dbReference>
<dbReference type="Gene3D" id="3.40.50.1820">
    <property type="entry name" value="alpha/beta hydrolase"/>
    <property type="match status" value="1"/>
</dbReference>
<dbReference type="InterPro" id="IPR000073">
    <property type="entry name" value="AB_hydrolase_1"/>
</dbReference>
<dbReference type="InterPro" id="IPR029058">
    <property type="entry name" value="AB_hydrolase_fold"/>
</dbReference>
<dbReference type="InterPro" id="IPR016812">
    <property type="entry name" value="PPase_methylesterase_euk"/>
</dbReference>
<dbReference type="PANTHER" id="PTHR14189:SF0">
    <property type="entry name" value="PROTEIN PHOSPHATASE METHYLESTERASE 1"/>
    <property type="match status" value="1"/>
</dbReference>
<dbReference type="PANTHER" id="PTHR14189">
    <property type="entry name" value="PROTEIN PHOSPHATASE METHYLESTERASE-1 RELATED"/>
    <property type="match status" value="1"/>
</dbReference>
<dbReference type="Pfam" id="PF12697">
    <property type="entry name" value="Abhydrolase_6"/>
    <property type="match status" value="1"/>
</dbReference>
<dbReference type="PIRSF" id="PIRSF022950">
    <property type="entry name" value="PPase_methylesterase_euk"/>
    <property type="match status" value="1"/>
</dbReference>
<dbReference type="SUPFAM" id="SSF53474">
    <property type="entry name" value="alpha/beta-Hydrolases"/>
    <property type="match status" value="1"/>
</dbReference>